<protein>
    <recommendedName>
        <fullName evidence="1">DNA-directed RNA polymerase subunit omega</fullName>
        <shortName evidence="1">RNAP omega subunit</shortName>
        <ecNumber evidence="1">2.7.7.6</ecNumber>
    </recommendedName>
    <alternativeName>
        <fullName evidence="1">RNA polymerase omega subunit</fullName>
    </alternativeName>
    <alternativeName>
        <fullName evidence="1">Transcriptase subunit omega</fullName>
    </alternativeName>
</protein>
<organism>
    <name type="scientific">Pelotomaculum thermopropionicum (strain DSM 13744 / JCM 10971 / SI)</name>
    <dbReference type="NCBI Taxonomy" id="370438"/>
    <lineage>
        <taxon>Bacteria</taxon>
        <taxon>Bacillati</taxon>
        <taxon>Bacillota</taxon>
        <taxon>Clostridia</taxon>
        <taxon>Eubacteriales</taxon>
        <taxon>Desulfotomaculaceae</taxon>
        <taxon>Pelotomaculum</taxon>
    </lineage>
</organism>
<proteinExistence type="inferred from homology"/>
<accession>A5D1C3</accession>
<evidence type="ECO:0000255" key="1">
    <source>
        <dbReference type="HAMAP-Rule" id="MF_00366"/>
    </source>
</evidence>
<sequence length="69" mass="7604">MNQPSLDELLEKVDSRYTLVVVAAKRARELTERGKTKADGAAVMKPVTAALMEIAQNKVGYKRTRSGIK</sequence>
<comment type="function">
    <text evidence="1">Promotes RNA polymerase assembly. Latches the N- and C-terminal regions of the beta' subunit thereby facilitating its interaction with the beta and alpha subunits.</text>
</comment>
<comment type="catalytic activity">
    <reaction evidence="1">
        <text>RNA(n) + a ribonucleoside 5'-triphosphate = RNA(n+1) + diphosphate</text>
        <dbReference type="Rhea" id="RHEA:21248"/>
        <dbReference type="Rhea" id="RHEA-COMP:14527"/>
        <dbReference type="Rhea" id="RHEA-COMP:17342"/>
        <dbReference type="ChEBI" id="CHEBI:33019"/>
        <dbReference type="ChEBI" id="CHEBI:61557"/>
        <dbReference type="ChEBI" id="CHEBI:140395"/>
        <dbReference type="EC" id="2.7.7.6"/>
    </reaction>
</comment>
<comment type="subunit">
    <text evidence="1">The RNAP catalytic core consists of 2 alpha, 1 beta, 1 beta' and 1 omega subunit. When a sigma factor is associated with the core the holoenzyme is formed, which can initiate transcription.</text>
</comment>
<comment type="similarity">
    <text evidence="1">Belongs to the RNA polymerase subunit omega family.</text>
</comment>
<name>RPOZ_PELTS</name>
<feature type="chain" id="PRO_1000079638" description="DNA-directed RNA polymerase subunit omega">
    <location>
        <begin position="1"/>
        <end position="69"/>
    </location>
</feature>
<reference key="1">
    <citation type="journal article" date="2008" name="Genome Res.">
        <title>The genome of Pelotomaculum thermopropionicum reveals niche-associated evolution in anaerobic microbiota.</title>
        <authorList>
            <person name="Kosaka T."/>
            <person name="Kato S."/>
            <person name="Shimoyama T."/>
            <person name="Ishii S."/>
            <person name="Abe T."/>
            <person name="Watanabe K."/>
        </authorList>
    </citation>
    <scope>NUCLEOTIDE SEQUENCE [LARGE SCALE GENOMIC DNA]</scope>
    <source>
        <strain>DSM 13744 / JCM 10971 / SI</strain>
    </source>
</reference>
<dbReference type="EC" id="2.7.7.6" evidence="1"/>
<dbReference type="EMBL" id="AP009389">
    <property type="protein sequence ID" value="BAF59975.1"/>
    <property type="molecule type" value="Genomic_DNA"/>
</dbReference>
<dbReference type="SMR" id="A5D1C3"/>
<dbReference type="STRING" id="370438.PTH_1794"/>
<dbReference type="KEGG" id="pth:PTH_1794"/>
<dbReference type="eggNOG" id="COG1758">
    <property type="taxonomic scope" value="Bacteria"/>
</dbReference>
<dbReference type="HOGENOM" id="CLU_125406_6_1_9"/>
<dbReference type="Proteomes" id="UP000006556">
    <property type="component" value="Chromosome"/>
</dbReference>
<dbReference type="GO" id="GO:0000428">
    <property type="term" value="C:DNA-directed RNA polymerase complex"/>
    <property type="evidence" value="ECO:0007669"/>
    <property type="project" value="UniProtKB-KW"/>
</dbReference>
<dbReference type="GO" id="GO:0003677">
    <property type="term" value="F:DNA binding"/>
    <property type="evidence" value="ECO:0007669"/>
    <property type="project" value="UniProtKB-UniRule"/>
</dbReference>
<dbReference type="GO" id="GO:0003899">
    <property type="term" value="F:DNA-directed RNA polymerase activity"/>
    <property type="evidence" value="ECO:0007669"/>
    <property type="project" value="UniProtKB-UniRule"/>
</dbReference>
<dbReference type="GO" id="GO:0006351">
    <property type="term" value="P:DNA-templated transcription"/>
    <property type="evidence" value="ECO:0007669"/>
    <property type="project" value="UniProtKB-UniRule"/>
</dbReference>
<dbReference type="Gene3D" id="3.90.940.10">
    <property type="match status" value="1"/>
</dbReference>
<dbReference type="HAMAP" id="MF_00366">
    <property type="entry name" value="RNApol_bact_RpoZ"/>
    <property type="match status" value="1"/>
</dbReference>
<dbReference type="InterPro" id="IPR003716">
    <property type="entry name" value="DNA-dir_RNA_pol_omega"/>
</dbReference>
<dbReference type="InterPro" id="IPR006110">
    <property type="entry name" value="Pol_omega/Rpo6/RPB6"/>
</dbReference>
<dbReference type="InterPro" id="IPR036161">
    <property type="entry name" value="RPB6/omega-like_sf"/>
</dbReference>
<dbReference type="NCBIfam" id="TIGR00690">
    <property type="entry name" value="rpoZ"/>
    <property type="match status" value="1"/>
</dbReference>
<dbReference type="PANTHER" id="PTHR34476">
    <property type="entry name" value="DNA-DIRECTED RNA POLYMERASE SUBUNIT OMEGA"/>
    <property type="match status" value="1"/>
</dbReference>
<dbReference type="PANTHER" id="PTHR34476:SF1">
    <property type="entry name" value="DNA-DIRECTED RNA POLYMERASE SUBUNIT OMEGA"/>
    <property type="match status" value="1"/>
</dbReference>
<dbReference type="Pfam" id="PF01192">
    <property type="entry name" value="RNA_pol_Rpb6"/>
    <property type="match status" value="1"/>
</dbReference>
<dbReference type="SMART" id="SM01409">
    <property type="entry name" value="RNA_pol_Rpb6"/>
    <property type="match status" value="1"/>
</dbReference>
<dbReference type="SUPFAM" id="SSF63562">
    <property type="entry name" value="RPB6/omega subunit-like"/>
    <property type="match status" value="1"/>
</dbReference>
<gene>
    <name evidence="1" type="primary">rpoZ</name>
    <name type="ordered locus">PTH_1794</name>
</gene>
<keyword id="KW-0240">DNA-directed RNA polymerase</keyword>
<keyword id="KW-0548">Nucleotidyltransferase</keyword>
<keyword id="KW-1185">Reference proteome</keyword>
<keyword id="KW-0804">Transcription</keyword>
<keyword id="KW-0808">Transferase</keyword>